<name>RBSD_BACSU</name>
<proteinExistence type="evidence at protein level"/>
<feature type="chain" id="PRO_0000097190" description="D-ribose pyranase">
    <location>
        <begin position="1"/>
        <end position="131"/>
    </location>
</feature>
<feature type="active site" description="Proton donor" evidence="3">
    <location>
        <position position="20"/>
    </location>
</feature>
<feature type="binding site">
    <location>
        <position position="28"/>
    </location>
    <ligand>
        <name>substrate</name>
    </ligand>
</feature>
<feature type="binding site">
    <location>
        <position position="98"/>
    </location>
    <ligand>
        <name>substrate</name>
    </ligand>
</feature>
<feature type="binding site">
    <location>
        <begin position="120"/>
        <end position="122"/>
    </location>
    <ligand>
        <name>substrate</name>
    </ligand>
</feature>
<feature type="mutagenesis site" description="Reduced sugar-binding affinity." evidence="2">
    <original>H</original>
    <variation>A</variation>
    <location>
        <position position="98"/>
    </location>
</feature>
<feature type="helix" evidence="4">
    <location>
        <begin position="9"/>
        <end position="17"/>
    </location>
</feature>
<feature type="strand" evidence="4">
    <location>
        <begin position="23"/>
        <end position="27"/>
    </location>
</feature>
<feature type="strand" evidence="4">
    <location>
        <begin position="37"/>
        <end position="41"/>
    </location>
</feature>
<feature type="helix" evidence="4">
    <location>
        <begin position="51"/>
        <end position="61"/>
    </location>
</feature>
<feature type="strand" evidence="4">
    <location>
        <begin position="64"/>
        <end position="70"/>
    </location>
</feature>
<feature type="helix" evidence="4">
    <location>
        <begin position="72"/>
        <end position="76"/>
    </location>
</feature>
<feature type="helix" evidence="4">
    <location>
        <begin position="78"/>
        <end position="87"/>
    </location>
</feature>
<feature type="strand" evidence="4">
    <location>
        <begin position="89"/>
        <end position="96"/>
    </location>
</feature>
<feature type="helix" evidence="4">
    <location>
        <begin position="98"/>
        <end position="104"/>
    </location>
</feature>
<feature type="helix" evidence="4">
    <location>
        <begin position="105"/>
        <end position="107"/>
    </location>
</feature>
<feature type="strand" evidence="4">
    <location>
        <begin position="109"/>
        <end position="113"/>
    </location>
</feature>
<feature type="strand" evidence="4">
    <location>
        <begin position="123"/>
        <end position="127"/>
    </location>
</feature>
<dbReference type="EC" id="5.4.99.62"/>
<dbReference type="EMBL" id="Z25798">
    <property type="protein sequence ID" value="CAA81050.1"/>
    <property type="molecule type" value="Genomic_DNA"/>
</dbReference>
<dbReference type="EMBL" id="Z92953">
    <property type="protein sequence ID" value="CAB07464.1"/>
    <property type="molecule type" value="Genomic_DNA"/>
</dbReference>
<dbReference type="EMBL" id="AL009126">
    <property type="protein sequence ID" value="CAB15610.1"/>
    <property type="molecule type" value="Genomic_DNA"/>
</dbReference>
<dbReference type="PIR" id="I40464">
    <property type="entry name" value="I40464"/>
</dbReference>
<dbReference type="RefSeq" id="NP_391474.1">
    <property type="nucleotide sequence ID" value="NC_000964.3"/>
</dbReference>
<dbReference type="RefSeq" id="WP_003244175.1">
    <property type="nucleotide sequence ID" value="NZ_OZ025638.1"/>
</dbReference>
<dbReference type="PDB" id="1OGC">
    <property type="method" value="X-ray"/>
    <property type="resolution" value="2.00 A"/>
    <property type="chains" value="A/B/C/D/E=1-131"/>
</dbReference>
<dbReference type="PDB" id="1OGD">
    <property type="method" value="X-ray"/>
    <property type="resolution" value="1.95 A"/>
    <property type="chains" value="A/B/C/D/E=1-131"/>
</dbReference>
<dbReference type="PDB" id="1OGE">
    <property type="method" value="X-ray"/>
    <property type="resolution" value="2.05 A"/>
    <property type="chains" value="A/B/C/D/E=1-131"/>
</dbReference>
<dbReference type="PDB" id="1OGF">
    <property type="method" value="X-ray"/>
    <property type="resolution" value="2.30 A"/>
    <property type="chains" value="A/B/C/D/E=1-131"/>
</dbReference>
<dbReference type="PDBsum" id="1OGC"/>
<dbReference type="PDBsum" id="1OGD"/>
<dbReference type="PDBsum" id="1OGE"/>
<dbReference type="PDBsum" id="1OGF"/>
<dbReference type="SMR" id="P36946"/>
<dbReference type="FunCoup" id="P36946">
    <property type="interactions" value="239"/>
</dbReference>
<dbReference type="STRING" id="224308.BSU35930"/>
<dbReference type="DrugBank" id="DB04286">
    <property type="generic name" value="beta-D-Ribopyranose"/>
</dbReference>
<dbReference type="DrugBank" id="DB04352">
    <property type="generic name" value="beta-D-Ribose-5-phosphate"/>
</dbReference>
<dbReference type="jPOST" id="P36946"/>
<dbReference type="PaxDb" id="224308-BSU35930"/>
<dbReference type="EnsemblBacteria" id="CAB15610">
    <property type="protein sequence ID" value="CAB15610"/>
    <property type="gene ID" value="BSU_35930"/>
</dbReference>
<dbReference type="GeneID" id="936846"/>
<dbReference type="KEGG" id="bsu:BSU35930"/>
<dbReference type="PATRIC" id="fig|224308.179.peg.3890"/>
<dbReference type="eggNOG" id="COG1869">
    <property type="taxonomic scope" value="Bacteria"/>
</dbReference>
<dbReference type="InParanoid" id="P36946"/>
<dbReference type="OrthoDB" id="9805009at2"/>
<dbReference type="PhylomeDB" id="P36946"/>
<dbReference type="BioCyc" id="BSUB:BSU35930-MONOMER"/>
<dbReference type="BRENDA" id="5.4.99.62">
    <property type="organism ID" value="658"/>
</dbReference>
<dbReference type="UniPathway" id="UPA00916">
    <property type="reaction ID" value="UER00888"/>
</dbReference>
<dbReference type="EvolutionaryTrace" id="P36946"/>
<dbReference type="Proteomes" id="UP000001570">
    <property type="component" value="Chromosome"/>
</dbReference>
<dbReference type="GO" id="GO:0005829">
    <property type="term" value="C:cytosol"/>
    <property type="evidence" value="ECO:0000318"/>
    <property type="project" value="GO_Central"/>
</dbReference>
<dbReference type="GO" id="GO:0062193">
    <property type="term" value="F:D-ribose pyranase activity"/>
    <property type="evidence" value="ECO:0007669"/>
    <property type="project" value="UniProtKB-EC"/>
</dbReference>
<dbReference type="GO" id="GO:0016872">
    <property type="term" value="F:intramolecular lyase activity"/>
    <property type="evidence" value="ECO:0007669"/>
    <property type="project" value="UniProtKB-UniRule"/>
</dbReference>
<dbReference type="GO" id="GO:0016866">
    <property type="term" value="F:intramolecular transferase activity"/>
    <property type="evidence" value="ECO:0000318"/>
    <property type="project" value="GO_Central"/>
</dbReference>
<dbReference type="GO" id="GO:0048029">
    <property type="term" value="F:monosaccharide binding"/>
    <property type="evidence" value="ECO:0007669"/>
    <property type="project" value="InterPro"/>
</dbReference>
<dbReference type="GO" id="GO:0019303">
    <property type="term" value="P:D-ribose catabolic process"/>
    <property type="evidence" value="ECO:0000318"/>
    <property type="project" value="GO_Central"/>
</dbReference>
<dbReference type="FunFam" id="3.40.1650.10:FF:000003">
    <property type="entry name" value="D-ribose pyranase"/>
    <property type="match status" value="1"/>
</dbReference>
<dbReference type="Gene3D" id="3.40.1650.10">
    <property type="entry name" value="RbsD-like domain"/>
    <property type="match status" value="1"/>
</dbReference>
<dbReference type="HAMAP" id="MF_01661">
    <property type="entry name" value="D_rib_pyranase"/>
    <property type="match status" value="1"/>
</dbReference>
<dbReference type="InterPro" id="IPR023064">
    <property type="entry name" value="D-ribose_pyranase"/>
</dbReference>
<dbReference type="InterPro" id="IPR023750">
    <property type="entry name" value="RbsD-like_sf"/>
</dbReference>
<dbReference type="InterPro" id="IPR007721">
    <property type="entry name" value="RbsD_FucU"/>
</dbReference>
<dbReference type="NCBIfam" id="NF008761">
    <property type="entry name" value="PRK11797.1"/>
    <property type="match status" value="1"/>
</dbReference>
<dbReference type="PANTHER" id="PTHR37831">
    <property type="entry name" value="D-RIBOSE PYRANASE"/>
    <property type="match status" value="1"/>
</dbReference>
<dbReference type="PANTHER" id="PTHR37831:SF1">
    <property type="entry name" value="D-RIBOSE PYRANASE"/>
    <property type="match status" value="1"/>
</dbReference>
<dbReference type="Pfam" id="PF05025">
    <property type="entry name" value="RbsD_FucU"/>
    <property type="match status" value="1"/>
</dbReference>
<dbReference type="SUPFAM" id="SSF102546">
    <property type="entry name" value="RbsD-like"/>
    <property type="match status" value="1"/>
</dbReference>
<organism>
    <name type="scientific">Bacillus subtilis (strain 168)</name>
    <dbReference type="NCBI Taxonomy" id="224308"/>
    <lineage>
        <taxon>Bacteria</taxon>
        <taxon>Bacillati</taxon>
        <taxon>Bacillota</taxon>
        <taxon>Bacilli</taxon>
        <taxon>Bacillales</taxon>
        <taxon>Bacillaceae</taxon>
        <taxon>Bacillus</taxon>
    </lineage>
</organism>
<gene>
    <name type="primary">rbsD</name>
    <name type="ordered locus">BSU35930</name>
</gene>
<protein>
    <recommendedName>
        <fullName>D-ribose pyranase</fullName>
        <ecNumber>5.4.99.62</ecNumber>
    </recommendedName>
</protein>
<sequence>MKKHGILNSHLAKILADLGHTDKIVIADAGLPVPDGVLKIDLSLKPGLPAFQDTAAVLAEEMAVEKVIAAAEIKASNQENAKFLENLFSEQEIEYLSHEEFKLLTKDAKAVIRTGEFTPYANCILQAGVLF</sequence>
<keyword id="KW-0002">3D-structure</keyword>
<keyword id="KW-0119">Carbohydrate metabolism</keyword>
<keyword id="KW-0963">Cytoplasm</keyword>
<keyword id="KW-0413">Isomerase</keyword>
<keyword id="KW-1185">Reference proteome</keyword>
<comment type="function">
    <text evidence="1">Catalyzes the interconversion of beta-pyran and beta-furan forms of D-ribose.</text>
</comment>
<comment type="catalytic activity">
    <reaction>
        <text>beta-D-ribopyranose = beta-D-ribofuranose</text>
        <dbReference type="Rhea" id="RHEA:25432"/>
        <dbReference type="ChEBI" id="CHEBI:27476"/>
        <dbReference type="ChEBI" id="CHEBI:47002"/>
        <dbReference type="EC" id="5.4.99.62"/>
    </reaction>
</comment>
<comment type="pathway">
    <text>Carbohydrate metabolism; D-ribose degradation; D-ribose 5-phosphate from beta-D-ribopyranose: step 1/2.</text>
</comment>
<comment type="subunit">
    <text evidence="2">Homodecamer; dimer of pentamers.</text>
</comment>
<comment type="subcellular location">
    <subcellularLocation>
        <location evidence="3">Cytoplasm</location>
    </subcellularLocation>
</comment>
<comment type="similarity">
    <text evidence="3">Belongs to the RbsD / FucU family. RbsD subfamily.</text>
</comment>
<comment type="caution">
    <text evidence="3">Was originally thought (PubMed:7921236, PubMed:9353933) to be a high affinity ribose transport protein.</text>
</comment>
<reference key="1">
    <citation type="journal article" date="1994" name="Microbiology">
        <title>Analysis of a ribose transport operon from Bacillus subtilis.</title>
        <authorList>
            <person name="Woodson K."/>
            <person name="Devine K.M."/>
        </authorList>
    </citation>
    <scope>NUCLEOTIDE SEQUENCE [GENOMIC DNA]</scope>
    <source>
        <strain>168</strain>
    </source>
</reference>
<reference key="2">
    <citation type="journal article" date="1997" name="Microbiology">
        <title>The Bacillus subtilis genome from gerBC (311 degrees) to licR (334 degrees).</title>
        <authorList>
            <person name="Presecan E."/>
            <person name="Moszer I."/>
            <person name="Boursier L."/>
            <person name="Cruz Ramos H."/>
            <person name="De La Fuente V."/>
            <person name="Hullo M.-F."/>
            <person name="Lelong C."/>
            <person name="Schleich S."/>
            <person name="Sekowska A."/>
            <person name="Song B.H."/>
            <person name="Villani G."/>
            <person name="Kunst F."/>
            <person name="Danchin A."/>
            <person name="Glaser P."/>
        </authorList>
    </citation>
    <scope>NUCLEOTIDE SEQUENCE [GENOMIC DNA]</scope>
    <source>
        <strain>168</strain>
    </source>
</reference>
<reference key="3">
    <citation type="journal article" date="1997" name="Nature">
        <title>The complete genome sequence of the Gram-positive bacterium Bacillus subtilis.</title>
        <authorList>
            <person name="Kunst F."/>
            <person name="Ogasawara N."/>
            <person name="Moszer I."/>
            <person name="Albertini A.M."/>
            <person name="Alloni G."/>
            <person name="Azevedo V."/>
            <person name="Bertero M.G."/>
            <person name="Bessieres P."/>
            <person name="Bolotin A."/>
            <person name="Borchert S."/>
            <person name="Borriss R."/>
            <person name="Boursier L."/>
            <person name="Brans A."/>
            <person name="Braun M."/>
            <person name="Brignell S.C."/>
            <person name="Bron S."/>
            <person name="Brouillet S."/>
            <person name="Bruschi C.V."/>
            <person name="Caldwell B."/>
            <person name="Capuano V."/>
            <person name="Carter N.M."/>
            <person name="Choi S.-K."/>
            <person name="Codani J.-J."/>
            <person name="Connerton I.F."/>
            <person name="Cummings N.J."/>
            <person name="Daniel R.A."/>
            <person name="Denizot F."/>
            <person name="Devine K.M."/>
            <person name="Duesterhoeft A."/>
            <person name="Ehrlich S.D."/>
            <person name="Emmerson P.T."/>
            <person name="Entian K.-D."/>
            <person name="Errington J."/>
            <person name="Fabret C."/>
            <person name="Ferrari E."/>
            <person name="Foulger D."/>
            <person name="Fritz C."/>
            <person name="Fujita M."/>
            <person name="Fujita Y."/>
            <person name="Fuma S."/>
            <person name="Galizzi A."/>
            <person name="Galleron N."/>
            <person name="Ghim S.-Y."/>
            <person name="Glaser P."/>
            <person name="Goffeau A."/>
            <person name="Golightly E.J."/>
            <person name="Grandi G."/>
            <person name="Guiseppi G."/>
            <person name="Guy B.J."/>
            <person name="Haga K."/>
            <person name="Haiech J."/>
            <person name="Harwood C.R."/>
            <person name="Henaut A."/>
            <person name="Hilbert H."/>
            <person name="Holsappel S."/>
            <person name="Hosono S."/>
            <person name="Hullo M.-F."/>
            <person name="Itaya M."/>
            <person name="Jones L.-M."/>
            <person name="Joris B."/>
            <person name="Karamata D."/>
            <person name="Kasahara Y."/>
            <person name="Klaerr-Blanchard M."/>
            <person name="Klein C."/>
            <person name="Kobayashi Y."/>
            <person name="Koetter P."/>
            <person name="Koningstein G."/>
            <person name="Krogh S."/>
            <person name="Kumano M."/>
            <person name="Kurita K."/>
            <person name="Lapidus A."/>
            <person name="Lardinois S."/>
            <person name="Lauber J."/>
            <person name="Lazarevic V."/>
            <person name="Lee S.-M."/>
            <person name="Levine A."/>
            <person name="Liu H."/>
            <person name="Masuda S."/>
            <person name="Mauel C."/>
            <person name="Medigue C."/>
            <person name="Medina N."/>
            <person name="Mellado R.P."/>
            <person name="Mizuno M."/>
            <person name="Moestl D."/>
            <person name="Nakai S."/>
            <person name="Noback M."/>
            <person name="Noone D."/>
            <person name="O'Reilly M."/>
            <person name="Ogawa K."/>
            <person name="Ogiwara A."/>
            <person name="Oudega B."/>
            <person name="Park S.-H."/>
            <person name="Parro V."/>
            <person name="Pohl T.M."/>
            <person name="Portetelle D."/>
            <person name="Porwollik S."/>
            <person name="Prescott A.M."/>
            <person name="Presecan E."/>
            <person name="Pujic P."/>
            <person name="Purnelle B."/>
            <person name="Rapoport G."/>
            <person name="Rey M."/>
            <person name="Reynolds S."/>
            <person name="Rieger M."/>
            <person name="Rivolta C."/>
            <person name="Rocha E."/>
            <person name="Roche B."/>
            <person name="Rose M."/>
            <person name="Sadaie Y."/>
            <person name="Sato T."/>
            <person name="Scanlan E."/>
            <person name="Schleich S."/>
            <person name="Schroeter R."/>
            <person name="Scoffone F."/>
            <person name="Sekiguchi J."/>
            <person name="Sekowska A."/>
            <person name="Seror S.J."/>
            <person name="Serror P."/>
            <person name="Shin B.-S."/>
            <person name="Soldo B."/>
            <person name="Sorokin A."/>
            <person name="Tacconi E."/>
            <person name="Takagi T."/>
            <person name="Takahashi H."/>
            <person name="Takemaru K."/>
            <person name="Takeuchi M."/>
            <person name="Tamakoshi A."/>
            <person name="Tanaka T."/>
            <person name="Terpstra P."/>
            <person name="Tognoni A."/>
            <person name="Tosato V."/>
            <person name="Uchiyama S."/>
            <person name="Vandenbol M."/>
            <person name="Vannier F."/>
            <person name="Vassarotti A."/>
            <person name="Viari A."/>
            <person name="Wambutt R."/>
            <person name="Wedler E."/>
            <person name="Wedler H."/>
            <person name="Weitzenegger T."/>
            <person name="Winters P."/>
            <person name="Wipat A."/>
            <person name="Yamamoto H."/>
            <person name="Yamane K."/>
            <person name="Yasumoto K."/>
            <person name="Yata K."/>
            <person name="Yoshida K."/>
            <person name="Yoshikawa H.-F."/>
            <person name="Zumstein E."/>
            <person name="Yoshikawa H."/>
            <person name="Danchin A."/>
        </authorList>
    </citation>
    <scope>NUCLEOTIDE SEQUENCE [LARGE SCALE GENOMIC DNA]</scope>
    <source>
        <strain>168</strain>
    </source>
</reference>
<reference key="4">
    <citation type="journal article" date="2003" name="J. Biol. Chem.">
        <title>Crystal structures of RbsD leading to the identification of cytoplasmic sugar-binding proteins with a novel folding architecture.</title>
        <authorList>
            <person name="Kim M.-S."/>
            <person name="Shin J."/>
            <person name="Lee W."/>
            <person name="Lee H.-S."/>
            <person name="Oh B.-H."/>
        </authorList>
    </citation>
    <scope>X-RAY CRYSTALLOGRAPHY (1.95 ANGSTROMS) IN COMPLEXES WITH D-RIBOSE AND RIBOSE-5-PHOSPHATE</scope>
    <scope>SUBUNIT</scope>
    <scope>MUTAGENESIS OF HIS-98</scope>
    <scope>REACTION MECHANISM</scope>
</reference>
<evidence type="ECO:0000250" key="1"/>
<evidence type="ECO:0000269" key="2">
    <source>
    </source>
</evidence>
<evidence type="ECO:0000305" key="3"/>
<evidence type="ECO:0007829" key="4">
    <source>
        <dbReference type="PDB" id="1OGD"/>
    </source>
</evidence>
<accession>P36946</accession>